<proteinExistence type="inferred from homology"/>
<reference key="1">
    <citation type="journal article" date="2005" name="Nat. Genet.">
        <title>The complete genome sequence of Francisella tularensis, the causative agent of tularemia.</title>
        <authorList>
            <person name="Larsson P."/>
            <person name="Oyston P.C.F."/>
            <person name="Chain P."/>
            <person name="Chu M.C."/>
            <person name="Duffield M."/>
            <person name="Fuxelius H.-H."/>
            <person name="Garcia E."/>
            <person name="Haelltorp G."/>
            <person name="Johansson D."/>
            <person name="Isherwood K.E."/>
            <person name="Karp P.D."/>
            <person name="Larsson E."/>
            <person name="Liu Y."/>
            <person name="Michell S."/>
            <person name="Prior J."/>
            <person name="Prior R."/>
            <person name="Malfatti S."/>
            <person name="Sjoestedt A."/>
            <person name="Svensson K."/>
            <person name="Thompson N."/>
            <person name="Vergez L."/>
            <person name="Wagg J.K."/>
            <person name="Wren B.W."/>
            <person name="Lindler L.E."/>
            <person name="Andersson S.G.E."/>
            <person name="Forsman M."/>
            <person name="Titball R.W."/>
        </authorList>
    </citation>
    <scope>NUCLEOTIDE SEQUENCE [LARGE SCALE GENOMIC DNA]</scope>
    <source>
        <strain>SCHU S4 / Schu 4</strain>
    </source>
</reference>
<dbReference type="EC" id="2.1.1.192" evidence="1"/>
<dbReference type="EMBL" id="AJ749949">
    <property type="protein sequence ID" value="CAG45691.1"/>
    <property type="molecule type" value="Genomic_DNA"/>
</dbReference>
<dbReference type="RefSeq" id="WP_003021179.1">
    <property type="nucleotide sequence ID" value="NC_006570.2"/>
</dbReference>
<dbReference type="RefSeq" id="YP_170039.1">
    <property type="nucleotide sequence ID" value="NC_006570.2"/>
</dbReference>
<dbReference type="SMR" id="Q5NG03"/>
<dbReference type="STRING" id="177416.FTT_1058c"/>
<dbReference type="DNASU" id="3192030"/>
<dbReference type="EnsemblBacteria" id="CAG45691">
    <property type="protein sequence ID" value="CAG45691"/>
    <property type="gene ID" value="FTT_1058c"/>
</dbReference>
<dbReference type="KEGG" id="ftu:FTT_1058c"/>
<dbReference type="eggNOG" id="COG0820">
    <property type="taxonomic scope" value="Bacteria"/>
</dbReference>
<dbReference type="OrthoDB" id="9793973at2"/>
<dbReference type="Proteomes" id="UP000001174">
    <property type="component" value="Chromosome"/>
</dbReference>
<dbReference type="GO" id="GO:0005737">
    <property type="term" value="C:cytoplasm"/>
    <property type="evidence" value="ECO:0007669"/>
    <property type="project" value="UniProtKB-SubCell"/>
</dbReference>
<dbReference type="GO" id="GO:0051539">
    <property type="term" value="F:4 iron, 4 sulfur cluster binding"/>
    <property type="evidence" value="ECO:0007669"/>
    <property type="project" value="UniProtKB-UniRule"/>
</dbReference>
<dbReference type="GO" id="GO:0046872">
    <property type="term" value="F:metal ion binding"/>
    <property type="evidence" value="ECO:0007669"/>
    <property type="project" value="UniProtKB-KW"/>
</dbReference>
<dbReference type="GO" id="GO:0070040">
    <property type="term" value="F:rRNA (adenine(2503)-C2-)-methyltransferase activity"/>
    <property type="evidence" value="ECO:0007669"/>
    <property type="project" value="UniProtKB-UniRule"/>
</dbReference>
<dbReference type="GO" id="GO:0019843">
    <property type="term" value="F:rRNA binding"/>
    <property type="evidence" value="ECO:0007669"/>
    <property type="project" value="UniProtKB-UniRule"/>
</dbReference>
<dbReference type="GO" id="GO:0002935">
    <property type="term" value="F:tRNA (adenine(37)-C2)-methyltransferase activity"/>
    <property type="evidence" value="ECO:0007669"/>
    <property type="project" value="UniProtKB-UniRule"/>
</dbReference>
<dbReference type="GO" id="GO:0000049">
    <property type="term" value="F:tRNA binding"/>
    <property type="evidence" value="ECO:0007669"/>
    <property type="project" value="UniProtKB-UniRule"/>
</dbReference>
<dbReference type="GO" id="GO:0070475">
    <property type="term" value="P:rRNA base methylation"/>
    <property type="evidence" value="ECO:0007669"/>
    <property type="project" value="UniProtKB-UniRule"/>
</dbReference>
<dbReference type="GO" id="GO:0030488">
    <property type="term" value="P:tRNA methylation"/>
    <property type="evidence" value="ECO:0007669"/>
    <property type="project" value="UniProtKB-UniRule"/>
</dbReference>
<dbReference type="CDD" id="cd01335">
    <property type="entry name" value="Radical_SAM"/>
    <property type="match status" value="1"/>
</dbReference>
<dbReference type="FunFam" id="1.10.150.530:FF:000003">
    <property type="entry name" value="Dual-specificity RNA methyltransferase RlmN"/>
    <property type="match status" value="1"/>
</dbReference>
<dbReference type="FunFam" id="3.20.20.70:FF:000008">
    <property type="entry name" value="Dual-specificity RNA methyltransferase RlmN"/>
    <property type="match status" value="1"/>
</dbReference>
<dbReference type="Gene3D" id="1.10.150.530">
    <property type="match status" value="1"/>
</dbReference>
<dbReference type="Gene3D" id="3.20.20.70">
    <property type="entry name" value="Aldolase class I"/>
    <property type="match status" value="1"/>
</dbReference>
<dbReference type="HAMAP" id="MF_01849">
    <property type="entry name" value="RNA_methyltr_RlmN"/>
    <property type="match status" value="1"/>
</dbReference>
<dbReference type="InterPro" id="IPR013785">
    <property type="entry name" value="Aldolase_TIM"/>
</dbReference>
<dbReference type="InterPro" id="IPR006638">
    <property type="entry name" value="Elp3/MiaA/NifB-like_rSAM"/>
</dbReference>
<dbReference type="InterPro" id="IPR040072">
    <property type="entry name" value="Methyltransferase_A"/>
</dbReference>
<dbReference type="InterPro" id="IPR048641">
    <property type="entry name" value="RlmN_N"/>
</dbReference>
<dbReference type="InterPro" id="IPR027492">
    <property type="entry name" value="RNA_MTrfase_RlmN"/>
</dbReference>
<dbReference type="InterPro" id="IPR004383">
    <property type="entry name" value="rRNA_lsu_MTrfase_RlmN/Cfr"/>
</dbReference>
<dbReference type="InterPro" id="IPR007197">
    <property type="entry name" value="rSAM"/>
</dbReference>
<dbReference type="NCBIfam" id="TIGR00048">
    <property type="entry name" value="rRNA_mod_RlmN"/>
    <property type="match status" value="1"/>
</dbReference>
<dbReference type="PANTHER" id="PTHR30544">
    <property type="entry name" value="23S RRNA METHYLTRANSFERASE"/>
    <property type="match status" value="1"/>
</dbReference>
<dbReference type="PANTHER" id="PTHR30544:SF5">
    <property type="entry name" value="RADICAL SAM CORE DOMAIN-CONTAINING PROTEIN"/>
    <property type="match status" value="1"/>
</dbReference>
<dbReference type="Pfam" id="PF04055">
    <property type="entry name" value="Radical_SAM"/>
    <property type="match status" value="1"/>
</dbReference>
<dbReference type="Pfam" id="PF21016">
    <property type="entry name" value="RlmN_N"/>
    <property type="match status" value="1"/>
</dbReference>
<dbReference type="PIRSF" id="PIRSF006004">
    <property type="entry name" value="CHP00048"/>
    <property type="match status" value="1"/>
</dbReference>
<dbReference type="SFLD" id="SFLDF00275">
    <property type="entry name" value="adenosine_C2_methyltransferase"/>
    <property type="match status" value="1"/>
</dbReference>
<dbReference type="SFLD" id="SFLDG01082">
    <property type="entry name" value="B12-binding_domain_containing"/>
    <property type="match status" value="1"/>
</dbReference>
<dbReference type="SFLD" id="SFLDG01062">
    <property type="entry name" value="methyltransferase_(Class_A)"/>
    <property type="match status" value="1"/>
</dbReference>
<dbReference type="SMART" id="SM00729">
    <property type="entry name" value="Elp3"/>
    <property type="match status" value="1"/>
</dbReference>
<dbReference type="SUPFAM" id="SSF102114">
    <property type="entry name" value="Radical SAM enzymes"/>
    <property type="match status" value="1"/>
</dbReference>
<dbReference type="PROSITE" id="PS51918">
    <property type="entry name" value="RADICAL_SAM"/>
    <property type="match status" value="1"/>
</dbReference>
<name>RLMN_FRATT</name>
<protein>
    <recommendedName>
        <fullName evidence="1">Dual-specificity RNA methyltransferase RlmN</fullName>
        <ecNumber evidence="1">2.1.1.192</ecNumber>
    </recommendedName>
    <alternativeName>
        <fullName evidence="1">23S rRNA (adenine(2503)-C(2))-methyltransferase</fullName>
    </alternativeName>
    <alternativeName>
        <fullName evidence="1">23S rRNA m2A2503 methyltransferase</fullName>
    </alternativeName>
    <alternativeName>
        <fullName evidence="1">Ribosomal RNA large subunit methyltransferase N</fullName>
    </alternativeName>
    <alternativeName>
        <fullName evidence="1">tRNA (adenine(37)-C(2))-methyltransferase</fullName>
    </alternativeName>
    <alternativeName>
        <fullName evidence="1">tRNA m2A37 methyltransferase</fullName>
    </alternativeName>
</protein>
<gene>
    <name evidence="1" type="primary">rlmN</name>
    <name type="ordered locus">FTT_1058c</name>
</gene>
<sequence length="370" mass="41402">MQQDKVNLLGLNQKAIEDFFISIGEKKFHARQVFKWIHKKGVIDFDAMTDLGKNLRHKLKEKAQITIPKVVFSKASKDGTHKWLIDVGGSAVETVFILAEGRGTLCVSSQVGCTLNCSFCSTGKQGFNRNLSAAEVIAQLWIAARTLSKTDGEHDFTVTNIVMMGMGEPLMNFENVVPAMDIMMDDLAYGLSRRKVTLSTSGVVPRIYDLLEQSGVSLAVSLHAPNDMLRNEIVPINKKYNIDELLEACKLYAQKGPHKHITFEYTLIEEVNDNLSDAEELVALLKSREVPAKINLIPFNPYPGTPYKKPSNNRIHRFKEFLQHNGFVTTVRKTRGDDIDAACGQLAGDVMDKTNRKQRYLKKLGDTNAN</sequence>
<evidence type="ECO:0000255" key="1">
    <source>
        <dbReference type="HAMAP-Rule" id="MF_01849"/>
    </source>
</evidence>
<evidence type="ECO:0000255" key="2">
    <source>
        <dbReference type="PROSITE-ProRule" id="PRU01266"/>
    </source>
</evidence>
<keyword id="KW-0004">4Fe-4S</keyword>
<keyword id="KW-0963">Cytoplasm</keyword>
<keyword id="KW-1015">Disulfide bond</keyword>
<keyword id="KW-0408">Iron</keyword>
<keyword id="KW-0411">Iron-sulfur</keyword>
<keyword id="KW-0479">Metal-binding</keyword>
<keyword id="KW-0489">Methyltransferase</keyword>
<keyword id="KW-1185">Reference proteome</keyword>
<keyword id="KW-0698">rRNA processing</keyword>
<keyword id="KW-0949">S-adenosyl-L-methionine</keyword>
<keyword id="KW-0808">Transferase</keyword>
<keyword id="KW-0819">tRNA processing</keyword>
<organism>
    <name type="scientific">Francisella tularensis subsp. tularensis (strain SCHU S4 / Schu 4)</name>
    <dbReference type="NCBI Taxonomy" id="177416"/>
    <lineage>
        <taxon>Bacteria</taxon>
        <taxon>Pseudomonadati</taxon>
        <taxon>Pseudomonadota</taxon>
        <taxon>Gammaproteobacteria</taxon>
        <taxon>Thiotrichales</taxon>
        <taxon>Francisellaceae</taxon>
        <taxon>Francisella</taxon>
    </lineage>
</organism>
<feature type="chain" id="PRO_0000350185" description="Dual-specificity RNA methyltransferase RlmN">
    <location>
        <begin position="1"/>
        <end position="370"/>
    </location>
</feature>
<feature type="domain" description="Radical SAM core" evidence="2">
    <location>
        <begin position="99"/>
        <end position="337"/>
    </location>
</feature>
<feature type="active site" description="Proton acceptor" evidence="1">
    <location>
        <position position="93"/>
    </location>
</feature>
<feature type="active site" description="S-methylcysteine intermediate" evidence="1">
    <location>
        <position position="343"/>
    </location>
</feature>
<feature type="binding site" evidence="1">
    <location>
        <position position="113"/>
    </location>
    <ligand>
        <name>[4Fe-4S] cluster</name>
        <dbReference type="ChEBI" id="CHEBI:49883"/>
        <note>4Fe-4S-S-AdoMet</note>
    </ligand>
</feature>
<feature type="binding site" evidence="1">
    <location>
        <position position="117"/>
    </location>
    <ligand>
        <name>[4Fe-4S] cluster</name>
        <dbReference type="ChEBI" id="CHEBI:49883"/>
        <note>4Fe-4S-S-AdoMet</note>
    </ligand>
</feature>
<feature type="binding site" evidence="1">
    <location>
        <position position="120"/>
    </location>
    <ligand>
        <name>[4Fe-4S] cluster</name>
        <dbReference type="ChEBI" id="CHEBI:49883"/>
        <note>4Fe-4S-S-AdoMet</note>
    </ligand>
</feature>
<feature type="binding site" evidence="1">
    <location>
        <begin position="167"/>
        <end position="168"/>
    </location>
    <ligand>
        <name>S-adenosyl-L-methionine</name>
        <dbReference type="ChEBI" id="CHEBI:59789"/>
    </ligand>
</feature>
<feature type="binding site" evidence="1">
    <location>
        <position position="199"/>
    </location>
    <ligand>
        <name>S-adenosyl-L-methionine</name>
        <dbReference type="ChEBI" id="CHEBI:59789"/>
    </ligand>
</feature>
<feature type="binding site" evidence="1">
    <location>
        <begin position="221"/>
        <end position="223"/>
    </location>
    <ligand>
        <name>S-adenosyl-L-methionine</name>
        <dbReference type="ChEBI" id="CHEBI:59789"/>
    </ligand>
</feature>
<feature type="binding site" evidence="1">
    <location>
        <position position="300"/>
    </location>
    <ligand>
        <name>S-adenosyl-L-methionine</name>
        <dbReference type="ChEBI" id="CHEBI:59789"/>
    </ligand>
</feature>
<feature type="disulfide bond" description="(transient)" evidence="1">
    <location>
        <begin position="106"/>
        <end position="343"/>
    </location>
</feature>
<accession>Q5NG03</accession>
<comment type="function">
    <text evidence="1">Specifically methylates position 2 of adenine 2503 in 23S rRNA and position 2 of adenine 37 in tRNAs. m2A2503 modification seems to play a crucial role in the proofreading step occurring at the peptidyl transferase center and thus would serve to optimize ribosomal fidelity.</text>
</comment>
<comment type="catalytic activity">
    <reaction evidence="1">
        <text>adenosine(2503) in 23S rRNA + 2 reduced [2Fe-2S]-[ferredoxin] + 2 S-adenosyl-L-methionine = 2-methyladenosine(2503) in 23S rRNA + 5'-deoxyadenosine + L-methionine + 2 oxidized [2Fe-2S]-[ferredoxin] + S-adenosyl-L-homocysteine</text>
        <dbReference type="Rhea" id="RHEA:42916"/>
        <dbReference type="Rhea" id="RHEA-COMP:10000"/>
        <dbReference type="Rhea" id="RHEA-COMP:10001"/>
        <dbReference type="Rhea" id="RHEA-COMP:10152"/>
        <dbReference type="Rhea" id="RHEA-COMP:10282"/>
        <dbReference type="ChEBI" id="CHEBI:17319"/>
        <dbReference type="ChEBI" id="CHEBI:33737"/>
        <dbReference type="ChEBI" id="CHEBI:33738"/>
        <dbReference type="ChEBI" id="CHEBI:57844"/>
        <dbReference type="ChEBI" id="CHEBI:57856"/>
        <dbReference type="ChEBI" id="CHEBI:59789"/>
        <dbReference type="ChEBI" id="CHEBI:74411"/>
        <dbReference type="ChEBI" id="CHEBI:74497"/>
        <dbReference type="EC" id="2.1.1.192"/>
    </reaction>
</comment>
<comment type="catalytic activity">
    <reaction evidence="1">
        <text>adenosine(37) in tRNA + 2 reduced [2Fe-2S]-[ferredoxin] + 2 S-adenosyl-L-methionine = 2-methyladenosine(37) in tRNA + 5'-deoxyadenosine + L-methionine + 2 oxidized [2Fe-2S]-[ferredoxin] + S-adenosyl-L-homocysteine</text>
        <dbReference type="Rhea" id="RHEA:43332"/>
        <dbReference type="Rhea" id="RHEA-COMP:10000"/>
        <dbReference type="Rhea" id="RHEA-COMP:10001"/>
        <dbReference type="Rhea" id="RHEA-COMP:10162"/>
        <dbReference type="Rhea" id="RHEA-COMP:10485"/>
        <dbReference type="ChEBI" id="CHEBI:17319"/>
        <dbReference type="ChEBI" id="CHEBI:33737"/>
        <dbReference type="ChEBI" id="CHEBI:33738"/>
        <dbReference type="ChEBI" id="CHEBI:57844"/>
        <dbReference type="ChEBI" id="CHEBI:57856"/>
        <dbReference type="ChEBI" id="CHEBI:59789"/>
        <dbReference type="ChEBI" id="CHEBI:74411"/>
        <dbReference type="ChEBI" id="CHEBI:74497"/>
        <dbReference type="EC" id="2.1.1.192"/>
    </reaction>
</comment>
<comment type="cofactor">
    <cofactor evidence="1">
        <name>[4Fe-4S] cluster</name>
        <dbReference type="ChEBI" id="CHEBI:49883"/>
    </cofactor>
    <text evidence="1">Binds 1 [4Fe-4S] cluster. The cluster is coordinated with 3 cysteines and an exchangeable S-adenosyl-L-methionine.</text>
</comment>
<comment type="subcellular location">
    <subcellularLocation>
        <location evidence="1">Cytoplasm</location>
    </subcellularLocation>
</comment>
<comment type="miscellaneous">
    <text evidence="1">Reaction proceeds by a ping-pong mechanism involving intermediate methylation of a conserved cysteine residue.</text>
</comment>
<comment type="similarity">
    <text evidence="1">Belongs to the radical SAM superfamily. RlmN family.</text>
</comment>